<name>RS7_PHOV8</name>
<evidence type="ECO:0000255" key="1">
    <source>
        <dbReference type="HAMAP-Rule" id="MF_00480"/>
    </source>
</evidence>
<evidence type="ECO:0000305" key="2"/>
<feature type="chain" id="PRO_0000344286" description="Small ribosomal subunit protein uS7">
    <location>
        <begin position="1"/>
        <end position="158"/>
    </location>
</feature>
<dbReference type="EMBL" id="CP000139">
    <property type="protein sequence ID" value="ABR38512.1"/>
    <property type="molecule type" value="Genomic_DNA"/>
</dbReference>
<dbReference type="RefSeq" id="WP_005844842.1">
    <property type="nucleotide sequence ID" value="NZ_JANSWM010000035.1"/>
</dbReference>
<dbReference type="SMR" id="A6KYJ8"/>
<dbReference type="STRING" id="435590.BVU_0808"/>
<dbReference type="PaxDb" id="435590-BVU_0808"/>
<dbReference type="GeneID" id="5301775"/>
<dbReference type="KEGG" id="bvu:BVU_0808"/>
<dbReference type="eggNOG" id="COG0049">
    <property type="taxonomic scope" value="Bacteria"/>
</dbReference>
<dbReference type="HOGENOM" id="CLU_072226_1_1_10"/>
<dbReference type="BioCyc" id="BVUL435590:G1G59-850-MONOMER"/>
<dbReference type="Proteomes" id="UP000002861">
    <property type="component" value="Chromosome"/>
</dbReference>
<dbReference type="GO" id="GO:0015935">
    <property type="term" value="C:small ribosomal subunit"/>
    <property type="evidence" value="ECO:0007669"/>
    <property type="project" value="InterPro"/>
</dbReference>
<dbReference type="GO" id="GO:0019843">
    <property type="term" value="F:rRNA binding"/>
    <property type="evidence" value="ECO:0007669"/>
    <property type="project" value="UniProtKB-UniRule"/>
</dbReference>
<dbReference type="GO" id="GO:0003735">
    <property type="term" value="F:structural constituent of ribosome"/>
    <property type="evidence" value="ECO:0007669"/>
    <property type="project" value="InterPro"/>
</dbReference>
<dbReference type="GO" id="GO:0000049">
    <property type="term" value="F:tRNA binding"/>
    <property type="evidence" value="ECO:0007669"/>
    <property type="project" value="UniProtKB-UniRule"/>
</dbReference>
<dbReference type="GO" id="GO:0006412">
    <property type="term" value="P:translation"/>
    <property type="evidence" value="ECO:0007669"/>
    <property type="project" value="UniProtKB-UniRule"/>
</dbReference>
<dbReference type="CDD" id="cd14869">
    <property type="entry name" value="uS7_Bacteria"/>
    <property type="match status" value="1"/>
</dbReference>
<dbReference type="FunFam" id="1.10.455.10:FF:000001">
    <property type="entry name" value="30S ribosomal protein S7"/>
    <property type="match status" value="1"/>
</dbReference>
<dbReference type="Gene3D" id="1.10.455.10">
    <property type="entry name" value="Ribosomal protein S7 domain"/>
    <property type="match status" value="1"/>
</dbReference>
<dbReference type="HAMAP" id="MF_00480_B">
    <property type="entry name" value="Ribosomal_uS7_B"/>
    <property type="match status" value="1"/>
</dbReference>
<dbReference type="InterPro" id="IPR000235">
    <property type="entry name" value="Ribosomal_uS7"/>
</dbReference>
<dbReference type="InterPro" id="IPR005717">
    <property type="entry name" value="Ribosomal_uS7_bac/org-type"/>
</dbReference>
<dbReference type="InterPro" id="IPR023798">
    <property type="entry name" value="Ribosomal_uS7_dom"/>
</dbReference>
<dbReference type="InterPro" id="IPR036823">
    <property type="entry name" value="Ribosomal_uS7_dom_sf"/>
</dbReference>
<dbReference type="NCBIfam" id="TIGR01029">
    <property type="entry name" value="rpsG_bact"/>
    <property type="match status" value="1"/>
</dbReference>
<dbReference type="PANTHER" id="PTHR11205">
    <property type="entry name" value="RIBOSOMAL PROTEIN S7"/>
    <property type="match status" value="1"/>
</dbReference>
<dbReference type="Pfam" id="PF00177">
    <property type="entry name" value="Ribosomal_S7"/>
    <property type="match status" value="1"/>
</dbReference>
<dbReference type="PIRSF" id="PIRSF002122">
    <property type="entry name" value="RPS7p_RPS7a_RPS5e_RPS7o"/>
    <property type="match status" value="1"/>
</dbReference>
<dbReference type="SUPFAM" id="SSF47973">
    <property type="entry name" value="Ribosomal protein S7"/>
    <property type="match status" value="1"/>
</dbReference>
<reference key="1">
    <citation type="journal article" date="2007" name="PLoS Biol.">
        <title>Evolution of symbiotic bacteria in the distal human intestine.</title>
        <authorList>
            <person name="Xu J."/>
            <person name="Mahowald M.A."/>
            <person name="Ley R.E."/>
            <person name="Lozupone C.A."/>
            <person name="Hamady M."/>
            <person name="Martens E.C."/>
            <person name="Henrissat B."/>
            <person name="Coutinho P.M."/>
            <person name="Minx P."/>
            <person name="Latreille P."/>
            <person name="Cordum H."/>
            <person name="Van Brunt A."/>
            <person name="Kim K."/>
            <person name="Fulton R.S."/>
            <person name="Fulton L.A."/>
            <person name="Clifton S.W."/>
            <person name="Wilson R.K."/>
            <person name="Knight R.D."/>
            <person name="Gordon J.I."/>
        </authorList>
    </citation>
    <scope>NUCLEOTIDE SEQUENCE [LARGE SCALE GENOMIC DNA]</scope>
    <source>
        <strain>ATCC 8482 / DSM 1447 / JCM 5826 / CCUG 4940 / NBRC 14291 / NCTC 11154</strain>
    </source>
</reference>
<accession>A6KYJ8</accession>
<keyword id="KW-0687">Ribonucleoprotein</keyword>
<keyword id="KW-0689">Ribosomal protein</keyword>
<keyword id="KW-0694">RNA-binding</keyword>
<keyword id="KW-0699">rRNA-binding</keyword>
<keyword id="KW-0820">tRNA-binding</keyword>
<proteinExistence type="inferred from homology"/>
<organism>
    <name type="scientific">Phocaeicola vulgatus (strain ATCC 8482 / DSM 1447 / JCM 5826 / CCUG 4940 / NBRC 14291 / NCTC 11154)</name>
    <name type="common">Bacteroides vulgatus</name>
    <dbReference type="NCBI Taxonomy" id="435590"/>
    <lineage>
        <taxon>Bacteria</taxon>
        <taxon>Pseudomonadati</taxon>
        <taxon>Bacteroidota</taxon>
        <taxon>Bacteroidia</taxon>
        <taxon>Bacteroidales</taxon>
        <taxon>Bacteroidaceae</taxon>
        <taxon>Phocaeicola</taxon>
    </lineage>
</organism>
<gene>
    <name evidence="1" type="primary">rpsG</name>
    <name type="ordered locus">BVU_0808</name>
</gene>
<protein>
    <recommendedName>
        <fullName evidence="1">Small ribosomal subunit protein uS7</fullName>
    </recommendedName>
    <alternativeName>
        <fullName evidence="2">30S ribosomal protein S7</fullName>
    </alternativeName>
</protein>
<comment type="function">
    <text evidence="1">One of the primary rRNA binding proteins, it binds directly to 16S rRNA where it nucleates assembly of the head domain of the 30S subunit. Is located at the subunit interface close to the decoding center, probably blocks exit of the E-site tRNA.</text>
</comment>
<comment type="subunit">
    <text evidence="1">Part of the 30S ribosomal subunit. Contacts proteins S9 and S11.</text>
</comment>
<comment type="similarity">
    <text evidence="1">Belongs to the universal ribosomal protein uS7 family.</text>
</comment>
<sequence>MRKAKPKKRVILPDPVFNDQKVSKFVNHLMYDGKKNTSYEIFYAALETVKTKLPNEEKSALEIWKKALDNVTPQIEVKSRRVGGATFQVPTEIRPDRKESISMKNLILFARKRGGKSMADKLAAEIIDAFNEQGGAYKRKEDMHRMAEANRAFAHFRF</sequence>